<organism>
    <name type="scientific">Bacillus subtilis (strain 168)</name>
    <dbReference type="NCBI Taxonomy" id="224308"/>
    <lineage>
        <taxon>Bacteria</taxon>
        <taxon>Bacillati</taxon>
        <taxon>Bacillota</taxon>
        <taxon>Bacilli</taxon>
        <taxon>Bacillales</taxon>
        <taxon>Bacillaceae</taxon>
        <taxon>Bacillus</taxon>
    </lineage>
</organism>
<dbReference type="EMBL" id="X87845">
    <property type="protein sequence ID" value="CAA61117.1"/>
    <property type="molecule type" value="Genomic_DNA"/>
</dbReference>
<dbReference type="EMBL" id="Z73234">
    <property type="protein sequence ID" value="CAA97595.1"/>
    <property type="molecule type" value="Genomic_DNA"/>
</dbReference>
<dbReference type="EMBL" id="AL009126">
    <property type="protein sequence ID" value="CAB13678.1"/>
    <property type="molecule type" value="Genomic_DNA"/>
</dbReference>
<dbReference type="PIR" id="S57405">
    <property type="entry name" value="S57405"/>
</dbReference>
<dbReference type="RefSeq" id="NP_389677.1">
    <property type="nucleotide sequence ID" value="NC_000964.3"/>
</dbReference>
<dbReference type="RefSeq" id="WP_003245707.1">
    <property type="nucleotide sequence ID" value="NZ_OZ025638.1"/>
</dbReference>
<dbReference type="SMR" id="P45709"/>
<dbReference type="FunCoup" id="P45709">
    <property type="interactions" value="168"/>
</dbReference>
<dbReference type="STRING" id="224308.BSU17940"/>
<dbReference type="PaxDb" id="224308-BSU17940"/>
<dbReference type="EnsemblBacteria" id="CAB13678">
    <property type="protein sequence ID" value="CAB13678"/>
    <property type="gene ID" value="BSU_17940"/>
</dbReference>
<dbReference type="GeneID" id="939468"/>
<dbReference type="KEGG" id="bsu:BSU17940"/>
<dbReference type="PATRIC" id="fig|224308.179.peg.1955"/>
<dbReference type="eggNOG" id="COG2201">
    <property type="taxonomic scope" value="Bacteria"/>
</dbReference>
<dbReference type="InParanoid" id="P45709"/>
<dbReference type="OrthoDB" id="9790669at2"/>
<dbReference type="PhylomeDB" id="P45709"/>
<dbReference type="BioCyc" id="BSUB:BSU17940-MONOMER"/>
<dbReference type="Proteomes" id="UP000001570">
    <property type="component" value="Chromosome"/>
</dbReference>
<dbReference type="GO" id="GO:0000160">
    <property type="term" value="P:phosphorelay signal transduction system"/>
    <property type="evidence" value="ECO:0007669"/>
    <property type="project" value="UniProtKB-KW"/>
</dbReference>
<dbReference type="CDD" id="cd17542">
    <property type="entry name" value="REC_CheY"/>
    <property type="match status" value="1"/>
</dbReference>
<dbReference type="Gene3D" id="3.40.50.2300">
    <property type="match status" value="1"/>
</dbReference>
<dbReference type="InterPro" id="IPR011006">
    <property type="entry name" value="CheY-like_superfamily"/>
</dbReference>
<dbReference type="InterPro" id="IPR001789">
    <property type="entry name" value="Sig_transdc_resp-reg_receiver"/>
</dbReference>
<dbReference type="InterPro" id="IPR052048">
    <property type="entry name" value="ST_Response_Regulator"/>
</dbReference>
<dbReference type="PANTHER" id="PTHR43228">
    <property type="entry name" value="TWO-COMPONENT RESPONSE REGULATOR"/>
    <property type="match status" value="1"/>
</dbReference>
<dbReference type="PANTHER" id="PTHR43228:SF1">
    <property type="entry name" value="TWO-COMPONENT RESPONSE REGULATOR ARR22"/>
    <property type="match status" value="1"/>
</dbReference>
<dbReference type="Pfam" id="PF00072">
    <property type="entry name" value="Response_reg"/>
    <property type="match status" value="1"/>
</dbReference>
<dbReference type="SMART" id="SM00448">
    <property type="entry name" value="REC"/>
    <property type="match status" value="1"/>
</dbReference>
<dbReference type="SUPFAM" id="SSF52172">
    <property type="entry name" value="CheY-like"/>
    <property type="match status" value="1"/>
</dbReference>
<dbReference type="PROSITE" id="PS50110">
    <property type="entry name" value="RESPONSE_REGULATORY"/>
    <property type="match status" value="1"/>
</dbReference>
<reference key="1">
    <citation type="journal article" date="1997" name="J. Bacteriol.">
        <title>Identification and characterization of the ccdA gene, required for cytochrome c synthesis in Bacillus subtilis.</title>
        <authorList>
            <person name="Schioett T."/>
            <person name="von Wachenfeldt C."/>
            <person name="Hederstedt L."/>
        </authorList>
    </citation>
    <scope>NUCLEOTIDE SEQUENCE [GENOMIC DNA]</scope>
    <source>
        <strain>168</strain>
    </source>
</reference>
<reference key="2">
    <citation type="journal article" date="1996" name="Microbiology">
        <title>New genes in the 170 degrees region of the Bacillus subtilis genome encode DNA gyrase subunits, a thioredoxin, a xylanase and an amino acid transporter.</title>
        <authorList>
            <person name="Rose M."/>
            <person name="Entian K.-D."/>
        </authorList>
    </citation>
    <scope>NUCLEOTIDE SEQUENCE [GENOMIC DNA]</scope>
    <source>
        <strain>168</strain>
    </source>
</reference>
<reference key="3">
    <citation type="journal article" date="1997" name="Nature">
        <title>The complete genome sequence of the Gram-positive bacterium Bacillus subtilis.</title>
        <authorList>
            <person name="Kunst F."/>
            <person name="Ogasawara N."/>
            <person name="Moszer I."/>
            <person name="Albertini A.M."/>
            <person name="Alloni G."/>
            <person name="Azevedo V."/>
            <person name="Bertero M.G."/>
            <person name="Bessieres P."/>
            <person name="Bolotin A."/>
            <person name="Borchert S."/>
            <person name="Borriss R."/>
            <person name="Boursier L."/>
            <person name="Brans A."/>
            <person name="Braun M."/>
            <person name="Brignell S.C."/>
            <person name="Bron S."/>
            <person name="Brouillet S."/>
            <person name="Bruschi C.V."/>
            <person name="Caldwell B."/>
            <person name="Capuano V."/>
            <person name="Carter N.M."/>
            <person name="Choi S.-K."/>
            <person name="Codani J.-J."/>
            <person name="Connerton I.F."/>
            <person name="Cummings N.J."/>
            <person name="Daniel R.A."/>
            <person name="Denizot F."/>
            <person name="Devine K.M."/>
            <person name="Duesterhoeft A."/>
            <person name="Ehrlich S.D."/>
            <person name="Emmerson P.T."/>
            <person name="Entian K.-D."/>
            <person name="Errington J."/>
            <person name="Fabret C."/>
            <person name="Ferrari E."/>
            <person name="Foulger D."/>
            <person name="Fritz C."/>
            <person name="Fujita M."/>
            <person name="Fujita Y."/>
            <person name="Fuma S."/>
            <person name="Galizzi A."/>
            <person name="Galleron N."/>
            <person name="Ghim S.-Y."/>
            <person name="Glaser P."/>
            <person name="Goffeau A."/>
            <person name="Golightly E.J."/>
            <person name="Grandi G."/>
            <person name="Guiseppi G."/>
            <person name="Guy B.J."/>
            <person name="Haga K."/>
            <person name="Haiech J."/>
            <person name="Harwood C.R."/>
            <person name="Henaut A."/>
            <person name="Hilbert H."/>
            <person name="Holsappel S."/>
            <person name="Hosono S."/>
            <person name="Hullo M.-F."/>
            <person name="Itaya M."/>
            <person name="Jones L.-M."/>
            <person name="Joris B."/>
            <person name="Karamata D."/>
            <person name="Kasahara Y."/>
            <person name="Klaerr-Blanchard M."/>
            <person name="Klein C."/>
            <person name="Kobayashi Y."/>
            <person name="Koetter P."/>
            <person name="Koningstein G."/>
            <person name="Krogh S."/>
            <person name="Kumano M."/>
            <person name="Kurita K."/>
            <person name="Lapidus A."/>
            <person name="Lardinois S."/>
            <person name="Lauber J."/>
            <person name="Lazarevic V."/>
            <person name="Lee S.-M."/>
            <person name="Levine A."/>
            <person name="Liu H."/>
            <person name="Masuda S."/>
            <person name="Mauel C."/>
            <person name="Medigue C."/>
            <person name="Medina N."/>
            <person name="Mellado R.P."/>
            <person name="Mizuno M."/>
            <person name="Moestl D."/>
            <person name="Nakai S."/>
            <person name="Noback M."/>
            <person name="Noone D."/>
            <person name="O'Reilly M."/>
            <person name="Ogawa K."/>
            <person name="Ogiwara A."/>
            <person name="Oudega B."/>
            <person name="Park S.-H."/>
            <person name="Parro V."/>
            <person name="Pohl T.M."/>
            <person name="Portetelle D."/>
            <person name="Porwollik S."/>
            <person name="Prescott A.M."/>
            <person name="Presecan E."/>
            <person name="Pujic P."/>
            <person name="Purnelle B."/>
            <person name="Rapoport G."/>
            <person name="Rey M."/>
            <person name="Reynolds S."/>
            <person name="Rieger M."/>
            <person name="Rivolta C."/>
            <person name="Rocha E."/>
            <person name="Roche B."/>
            <person name="Rose M."/>
            <person name="Sadaie Y."/>
            <person name="Sato T."/>
            <person name="Scanlan E."/>
            <person name="Schleich S."/>
            <person name="Schroeter R."/>
            <person name="Scoffone F."/>
            <person name="Sekiguchi J."/>
            <person name="Sekowska A."/>
            <person name="Seror S.J."/>
            <person name="Serror P."/>
            <person name="Shin B.-S."/>
            <person name="Soldo B."/>
            <person name="Sorokin A."/>
            <person name="Tacconi E."/>
            <person name="Takagi T."/>
            <person name="Takahashi H."/>
            <person name="Takemaru K."/>
            <person name="Takeuchi M."/>
            <person name="Tamakoshi A."/>
            <person name="Tanaka T."/>
            <person name="Terpstra P."/>
            <person name="Tognoni A."/>
            <person name="Tosato V."/>
            <person name="Uchiyama S."/>
            <person name="Vandenbol M."/>
            <person name="Vannier F."/>
            <person name="Vassarotti A."/>
            <person name="Viari A."/>
            <person name="Wambutt R."/>
            <person name="Wedler E."/>
            <person name="Wedler H."/>
            <person name="Weitzenegger T."/>
            <person name="Winters P."/>
            <person name="Wipat A."/>
            <person name="Yamamoto H."/>
            <person name="Yamane K."/>
            <person name="Yasumoto K."/>
            <person name="Yata K."/>
            <person name="Yoshida K."/>
            <person name="Yoshikawa H.-F."/>
            <person name="Zumstein E."/>
            <person name="Yoshikawa H."/>
            <person name="Danchin A."/>
        </authorList>
    </citation>
    <scope>NUCLEOTIDE SEQUENCE [LARGE SCALE GENOMIC DNA]</scope>
    <source>
        <strain>168</strain>
    </source>
</reference>
<accession>P45709</accession>
<name>CCDB_BACSU</name>
<evidence type="ECO:0000255" key="1">
    <source>
        <dbReference type="PROSITE-ProRule" id="PRU00169"/>
    </source>
</evidence>
<feature type="chain" id="PRO_0000081039" description="Protein CcdB">
    <location>
        <begin position="1"/>
        <end position="120"/>
    </location>
</feature>
<feature type="domain" description="Response regulatory" evidence="1">
    <location>
        <begin position="3"/>
        <end position="118"/>
    </location>
</feature>
<feature type="modified residue" description="4-aspartylphosphate" evidence="1">
    <location>
        <position position="53"/>
    </location>
</feature>
<keyword id="KW-0597">Phosphoprotein</keyword>
<keyword id="KW-1185">Reference proteome</keyword>
<keyword id="KW-0902">Two-component regulatory system</keyword>
<protein>
    <recommendedName>
        <fullName>Protein CcdB</fullName>
    </recommendedName>
</protein>
<sequence>MTRVLVVDDAKFMRVKIREILEEANYIIAGEAADGEQAADLYKKLRPDLVTMDITMPVKNGIKALRDILTFDPKAKVIMCTAMRQQRIVTEAIELGAKDFIVKPFEETKVLEAVSRVMGH</sequence>
<gene>
    <name type="primary">ccdB</name>
    <name type="synonym">yneI</name>
    <name type="synonym">yoxH</name>
    <name type="ordered locus">BSU17940</name>
</gene>
<proteinExistence type="inferred from homology"/>